<feature type="chain" id="PRO_0000406041" description="Gene 52 protein">
    <location>
        <begin position="1"/>
        <end position="135"/>
    </location>
</feature>
<feature type="region of interest" description="Disordered" evidence="1">
    <location>
        <begin position="1"/>
        <end position="20"/>
    </location>
</feature>
<feature type="region of interest" description="Disordered" evidence="1">
    <location>
        <begin position="110"/>
        <end position="135"/>
    </location>
</feature>
<feature type="compositionally biased region" description="Basic residues" evidence="1">
    <location>
        <begin position="122"/>
        <end position="135"/>
    </location>
</feature>
<proteinExistence type="inferred from homology"/>
<name>VG52_EHV2</name>
<keyword id="KW-1185">Reference proteome</keyword>
<reference key="1">
    <citation type="journal article" date="1995" name="J. Mol. Biol.">
        <title>The DNA sequence of equine herpesvirus 2.</title>
        <authorList>
            <person name="Telford E.A.R."/>
            <person name="Watson M.S."/>
            <person name="Aird H.C."/>
            <person name="Perry J."/>
            <person name="Davison A.J."/>
        </authorList>
    </citation>
    <scope>NUCLEOTIDE SEQUENCE [LARGE SCALE GENOMIC DNA]</scope>
</reference>
<accession>Q66654</accession>
<sequence length="135" mass="14670">MASGGGGGSKRCPKKQPTPEELAEELVKLRMENKALKSKLKEHVGDDDVVLTQAAKEAMVGSVVSGLTRSAAKQIEERIRKETLKATTKNEFEEVIKTLSFRVSLSYADLGGRASSDSSKASKPRGRSKHRAEKQ</sequence>
<gene>
    <name type="primary">52</name>
</gene>
<dbReference type="EMBL" id="U20824">
    <property type="protein sequence ID" value="AAC13840.1"/>
    <property type="molecule type" value="Genomic_DNA"/>
</dbReference>
<dbReference type="PIR" id="S55647">
    <property type="entry name" value="S55647"/>
</dbReference>
<dbReference type="SMR" id="Q66654"/>
<dbReference type="KEGG" id="vg:1461063"/>
<dbReference type="Proteomes" id="UP000007083">
    <property type="component" value="Segment"/>
</dbReference>
<dbReference type="Gene3D" id="1.10.3390.10">
    <property type="entry name" value="YejL-like"/>
    <property type="match status" value="1"/>
</dbReference>
<dbReference type="InterPro" id="IPR008642">
    <property type="entry name" value="Herpes_BLRF2"/>
</dbReference>
<dbReference type="Pfam" id="PF05812">
    <property type="entry name" value="Herpes_BLRF2"/>
    <property type="match status" value="1"/>
</dbReference>
<dbReference type="SUPFAM" id="SSF160459">
    <property type="entry name" value="BLRF2-like"/>
    <property type="match status" value="1"/>
</dbReference>
<organism>
    <name type="scientific">Equine herpesvirus 2 (strain 86/87)</name>
    <name type="common">EHV-2</name>
    <dbReference type="NCBI Taxonomy" id="82831"/>
    <lineage>
        <taxon>Viruses</taxon>
        <taxon>Duplodnaviria</taxon>
        <taxon>Heunggongvirae</taxon>
        <taxon>Peploviricota</taxon>
        <taxon>Herviviricetes</taxon>
        <taxon>Herpesvirales</taxon>
        <taxon>Orthoherpesviridae</taxon>
        <taxon>Gammaherpesvirinae</taxon>
        <taxon>Percavirus</taxon>
        <taxon>Percavirus equidgamma2</taxon>
        <taxon>Equid gammaherpesvirus 2</taxon>
    </lineage>
</organism>
<protein>
    <recommendedName>
        <fullName>Gene 52 protein</fullName>
    </recommendedName>
</protein>
<evidence type="ECO:0000256" key="1">
    <source>
        <dbReference type="SAM" id="MobiDB-lite"/>
    </source>
</evidence>
<evidence type="ECO:0000305" key="2"/>
<comment type="similarity">
    <text evidence="2">Belongs to the herpesviridae BLRF2 family.</text>
</comment>
<organismHost>
    <name type="scientific">Equus caballus</name>
    <name type="common">Horse</name>
    <dbReference type="NCBI Taxonomy" id="9796"/>
</organismHost>